<accession>P53677</accession>
<accession>B2RCR0</accession>
<accession>D3DSY2</accession>
<accession>Q7Z472</accession>
<evidence type="ECO:0000250" key="1"/>
<evidence type="ECO:0000255" key="2">
    <source>
        <dbReference type="PROSITE-ProRule" id="PRU00404"/>
    </source>
</evidence>
<evidence type="ECO:0000303" key="3">
    <source>
    </source>
</evidence>
<evidence type="ECO:0000305" key="4"/>
<sequence length="418" mass="46977">MIHSLFLINSSGDIFLEKHWKSVVSRSVCDYFFEAQERATEAENVPPVIPTPHHYLLSVYRHKIFFVAVIQTEVPPLFVIEFLHRVVDTFQDYFGVCSEPVIKDNVVVVYEVLEEMLDNGFPLATESNILKELIKPPTILRTVVNTITGSTNVGDQLPTGQLSVVPWRRTGVKYTNNEAYFDVIEEIDAIIDKSGSTITAEIQGVIDACVKLTGMPDLTLSFMNPRLLDDVSFHPCVRFKRWESERILSFIPPDGNFRLLSYHVSAQNLVAIPVYVKHNISFRDSSSLGRFEITVGPKQTMGKTIEGVTVTSQMPKGVLNMSLTPSQGTHTFDPVTKMLSWDVGKINPQKLPSLKGTMSLQAGASKPDENPTINLQFKIQQLAISGLKVNRLDMYGEKYKPFKGIKYMTKAGKFQVRT</sequence>
<dbReference type="EMBL" id="D38293">
    <property type="protein sequence ID" value="BAA07415.1"/>
    <property type="molecule type" value="mRNA"/>
</dbReference>
<dbReference type="EMBL" id="AK315228">
    <property type="protein sequence ID" value="BAG37657.1"/>
    <property type="molecule type" value="mRNA"/>
</dbReference>
<dbReference type="EMBL" id="AC103724">
    <property type="status" value="NOT_ANNOTATED_CDS"/>
    <property type="molecule type" value="Genomic_DNA"/>
</dbReference>
<dbReference type="EMBL" id="CH471080">
    <property type="protein sequence ID" value="EAW63236.1"/>
    <property type="molecule type" value="Genomic_DNA"/>
</dbReference>
<dbReference type="EMBL" id="CH471080">
    <property type="protein sequence ID" value="EAW63237.1"/>
    <property type="molecule type" value="Genomic_DNA"/>
</dbReference>
<dbReference type="EMBL" id="CH471080">
    <property type="protein sequence ID" value="EAW63238.1"/>
    <property type="molecule type" value="Genomic_DNA"/>
</dbReference>
<dbReference type="EMBL" id="BC056257">
    <property type="protein sequence ID" value="AAH56257.1"/>
    <property type="molecule type" value="mRNA"/>
</dbReference>
<dbReference type="EMBL" id="BC056398">
    <property type="protein sequence ID" value="AAH56398.1"/>
    <property type="molecule type" value="mRNA"/>
</dbReference>
<dbReference type="CCDS" id="CCDS6125.1">
    <molecule id="P53677-1"/>
</dbReference>
<dbReference type="PIR" id="A57170">
    <property type="entry name" value="A57170"/>
</dbReference>
<dbReference type="RefSeq" id="NP_001127768.1">
    <molecule id="P53677-1"/>
    <property type="nucleotide sequence ID" value="NM_001134296.2"/>
</dbReference>
<dbReference type="RefSeq" id="NP_006794.1">
    <molecule id="P53677-1"/>
    <property type="nucleotide sequence ID" value="NM_006803.4"/>
</dbReference>
<dbReference type="RefSeq" id="XP_016868466.1">
    <property type="nucleotide sequence ID" value="XM_017012977.1"/>
</dbReference>
<dbReference type="SMR" id="P53677"/>
<dbReference type="BioGRID" id="116147">
    <property type="interactions" value="28"/>
</dbReference>
<dbReference type="ComplexPortal" id="CPX-5053">
    <property type="entry name" value="Neuronal AP-3 Adaptor complex, sigma3b variant"/>
</dbReference>
<dbReference type="ComplexPortal" id="CPX-5055">
    <property type="entry name" value="Neuronal AP-3 Adaptor complex, sigma3a variant"/>
</dbReference>
<dbReference type="CORUM" id="P53677"/>
<dbReference type="FunCoup" id="P53677">
    <property type="interactions" value="1712"/>
</dbReference>
<dbReference type="IntAct" id="P53677">
    <property type="interactions" value="21"/>
</dbReference>
<dbReference type="STRING" id="9606.ENSP00000428787"/>
<dbReference type="iPTMnet" id="P53677"/>
<dbReference type="PhosphoSitePlus" id="P53677"/>
<dbReference type="SwissPalm" id="P53677"/>
<dbReference type="BioMuta" id="AP3M2"/>
<dbReference type="REPRODUCTION-2DPAGE" id="P53677"/>
<dbReference type="jPOST" id="P53677"/>
<dbReference type="MassIVE" id="P53677"/>
<dbReference type="PaxDb" id="9606-ENSP00000428787"/>
<dbReference type="PeptideAtlas" id="P53677"/>
<dbReference type="ProteomicsDB" id="56610">
    <molecule id="P53677-1"/>
</dbReference>
<dbReference type="ProteomicsDB" id="69159"/>
<dbReference type="Pumba" id="P53677"/>
<dbReference type="Antibodypedia" id="24004">
    <property type="antibodies" value="83 antibodies from 21 providers"/>
</dbReference>
<dbReference type="DNASU" id="10947"/>
<dbReference type="Ensembl" id="ENST00000396926.8">
    <molecule id="P53677-1"/>
    <property type="protein sequence ID" value="ENSP00000380132.3"/>
    <property type="gene ID" value="ENSG00000070718.13"/>
</dbReference>
<dbReference type="Ensembl" id="ENST00000518421.5">
    <molecule id="P53677-1"/>
    <property type="protein sequence ID" value="ENSP00000428787.1"/>
    <property type="gene ID" value="ENSG00000070718.13"/>
</dbReference>
<dbReference type="Ensembl" id="ENST00000530375.5">
    <molecule id="P53677-2"/>
    <property type="protein sequence ID" value="ENSP00000431918.1"/>
    <property type="gene ID" value="ENSG00000070718.13"/>
</dbReference>
<dbReference type="GeneID" id="10947"/>
<dbReference type="KEGG" id="hsa:10947"/>
<dbReference type="MANE-Select" id="ENST00000396926.8">
    <property type="protein sequence ID" value="ENSP00000380132.3"/>
    <property type="RefSeq nucleotide sequence ID" value="NM_006803.4"/>
    <property type="RefSeq protein sequence ID" value="NP_006794.1"/>
</dbReference>
<dbReference type="UCSC" id="uc003xoo.4">
    <molecule id="P53677-1"/>
    <property type="organism name" value="human"/>
</dbReference>
<dbReference type="AGR" id="HGNC:570"/>
<dbReference type="CTD" id="10947"/>
<dbReference type="DisGeNET" id="10947"/>
<dbReference type="GeneCards" id="AP3M2"/>
<dbReference type="HGNC" id="HGNC:570">
    <property type="gene designation" value="AP3M2"/>
</dbReference>
<dbReference type="HPA" id="ENSG00000070718">
    <property type="expression patterns" value="Low tissue specificity"/>
</dbReference>
<dbReference type="MIM" id="610469">
    <property type="type" value="gene"/>
</dbReference>
<dbReference type="neXtProt" id="NX_P53677"/>
<dbReference type="OpenTargets" id="ENSG00000070718"/>
<dbReference type="PharmGKB" id="PA24861"/>
<dbReference type="VEuPathDB" id="HostDB:ENSG00000070718"/>
<dbReference type="eggNOG" id="KOG2740">
    <property type="taxonomic scope" value="Eukaryota"/>
</dbReference>
<dbReference type="GeneTree" id="ENSGT00940000157991"/>
<dbReference type="InParanoid" id="P53677"/>
<dbReference type="OMA" id="LIWNIGK"/>
<dbReference type="OrthoDB" id="870at2759"/>
<dbReference type="PAN-GO" id="P53677">
    <property type="GO annotations" value="2 GO annotations based on evolutionary models"/>
</dbReference>
<dbReference type="PhylomeDB" id="P53677"/>
<dbReference type="TreeFam" id="TF315187"/>
<dbReference type="PathwayCommons" id="P53677"/>
<dbReference type="SignaLink" id="P53677"/>
<dbReference type="SIGNOR" id="P53677"/>
<dbReference type="BioGRID-ORCS" id="10947">
    <property type="hits" value="20 hits in 1155 CRISPR screens"/>
</dbReference>
<dbReference type="CD-CODE" id="FB4E32DD">
    <property type="entry name" value="Presynaptic clusters and postsynaptic densities"/>
</dbReference>
<dbReference type="ChiTaRS" id="AP3M2">
    <property type="organism name" value="human"/>
</dbReference>
<dbReference type="GenomeRNAi" id="10947"/>
<dbReference type="Pharos" id="P53677">
    <property type="development level" value="Tbio"/>
</dbReference>
<dbReference type="PRO" id="PR:P53677"/>
<dbReference type="Proteomes" id="UP000005640">
    <property type="component" value="Chromosome 8"/>
</dbReference>
<dbReference type="RNAct" id="P53677">
    <property type="molecule type" value="protein"/>
</dbReference>
<dbReference type="Bgee" id="ENSG00000070718">
    <property type="expression patterns" value="Expressed in endothelial cell and 186 other cell types or tissues"/>
</dbReference>
<dbReference type="ExpressionAtlas" id="P53677">
    <property type="expression patterns" value="baseline and differential"/>
</dbReference>
<dbReference type="GO" id="GO:0030123">
    <property type="term" value="C:AP-3 adaptor complex"/>
    <property type="evidence" value="ECO:0000303"/>
    <property type="project" value="ComplexPortal"/>
</dbReference>
<dbReference type="GO" id="GO:0030119">
    <property type="term" value="C:AP-type membrane coat adaptor complex"/>
    <property type="evidence" value="ECO:0000304"/>
    <property type="project" value="ProtInc"/>
</dbReference>
<dbReference type="GO" id="GO:1904115">
    <property type="term" value="C:axon cytoplasm"/>
    <property type="evidence" value="ECO:0007669"/>
    <property type="project" value="GOC"/>
</dbReference>
<dbReference type="GO" id="GO:0030131">
    <property type="term" value="C:clathrin adaptor complex"/>
    <property type="evidence" value="ECO:0007669"/>
    <property type="project" value="InterPro"/>
</dbReference>
<dbReference type="GO" id="GO:0031410">
    <property type="term" value="C:cytoplasmic vesicle"/>
    <property type="evidence" value="ECO:0000318"/>
    <property type="project" value="GO_Central"/>
</dbReference>
<dbReference type="GO" id="GO:0030659">
    <property type="term" value="C:cytoplasmic vesicle membrane"/>
    <property type="evidence" value="ECO:0007669"/>
    <property type="project" value="UniProtKB-SubCell"/>
</dbReference>
<dbReference type="GO" id="GO:0005769">
    <property type="term" value="C:early endosome"/>
    <property type="evidence" value="ECO:0000303"/>
    <property type="project" value="ComplexPortal"/>
</dbReference>
<dbReference type="GO" id="GO:0098982">
    <property type="term" value="C:GABA-ergic synapse"/>
    <property type="evidence" value="ECO:0007669"/>
    <property type="project" value="Ensembl"/>
</dbReference>
<dbReference type="GO" id="GO:0098978">
    <property type="term" value="C:glutamatergic synapse"/>
    <property type="evidence" value="ECO:0007669"/>
    <property type="project" value="Ensembl"/>
</dbReference>
<dbReference type="GO" id="GO:0005794">
    <property type="term" value="C:Golgi apparatus"/>
    <property type="evidence" value="ECO:0007669"/>
    <property type="project" value="UniProtKB-SubCell"/>
</dbReference>
<dbReference type="GO" id="GO:0008021">
    <property type="term" value="C:synaptic vesicle"/>
    <property type="evidence" value="ECO:0007669"/>
    <property type="project" value="Ensembl"/>
</dbReference>
<dbReference type="GO" id="GO:0008089">
    <property type="term" value="P:anterograde axonal transport"/>
    <property type="evidence" value="ECO:0000250"/>
    <property type="project" value="UniProtKB"/>
</dbReference>
<dbReference type="GO" id="GO:0048490">
    <property type="term" value="P:anterograde synaptic vesicle transport"/>
    <property type="evidence" value="ECO:0000250"/>
    <property type="project" value="UniProtKB"/>
</dbReference>
<dbReference type="GO" id="GO:0035654">
    <property type="term" value="P:clathrin-coated vesicle cargo loading, AP-3-mediated"/>
    <property type="evidence" value="ECO:0000303"/>
    <property type="project" value="ComplexPortal"/>
</dbReference>
<dbReference type="GO" id="GO:0006897">
    <property type="term" value="P:endocytosis"/>
    <property type="evidence" value="ECO:0000318"/>
    <property type="project" value="GO_Central"/>
</dbReference>
<dbReference type="GO" id="GO:0006886">
    <property type="term" value="P:intracellular protein transport"/>
    <property type="evidence" value="ECO:0007669"/>
    <property type="project" value="InterPro"/>
</dbReference>
<dbReference type="GO" id="GO:0046907">
    <property type="term" value="P:intracellular transport"/>
    <property type="evidence" value="ECO:0000303"/>
    <property type="project" value="ComplexPortal"/>
</dbReference>
<dbReference type="GO" id="GO:0016183">
    <property type="term" value="P:synaptic vesicle coating"/>
    <property type="evidence" value="ECO:0000303"/>
    <property type="project" value="ComplexPortal"/>
</dbReference>
<dbReference type="GO" id="GO:0036465">
    <property type="term" value="P:synaptic vesicle recycling"/>
    <property type="evidence" value="ECO:0000303"/>
    <property type="project" value="ComplexPortal"/>
</dbReference>
<dbReference type="CDD" id="cd09261">
    <property type="entry name" value="AP-3_Mu3B_Cterm"/>
    <property type="match status" value="1"/>
</dbReference>
<dbReference type="CDD" id="cd14837">
    <property type="entry name" value="AP3_Mu_N"/>
    <property type="match status" value="1"/>
</dbReference>
<dbReference type="FunFam" id="3.30.450.60:FF:000012">
    <property type="entry name" value="AP-3 complex subunit mu-1 isoform X1"/>
    <property type="match status" value="1"/>
</dbReference>
<dbReference type="FunFam" id="2.60.40.1170:FF:000006">
    <property type="entry name" value="Putative AP-3 complex subunit mu-2-like"/>
    <property type="match status" value="1"/>
</dbReference>
<dbReference type="Gene3D" id="3.30.450.60">
    <property type="match status" value="1"/>
</dbReference>
<dbReference type="Gene3D" id="2.60.40.1170">
    <property type="entry name" value="Mu homology domain, subdomain B"/>
    <property type="match status" value="2"/>
</dbReference>
<dbReference type="InterPro" id="IPR050431">
    <property type="entry name" value="Adaptor_comp_med_subunit"/>
</dbReference>
<dbReference type="InterPro" id="IPR036168">
    <property type="entry name" value="AP2_Mu_C_sf"/>
</dbReference>
<dbReference type="InterPro" id="IPR022775">
    <property type="entry name" value="AP_mu_sigma_su"/>
</dbReference>
<dbReference type="InterPro" id="IPR001392">
    <property type="entry name" value="Clathrin_mu"/>
</dbReference>
<dbReference type="InterPro" id="IPR018240">
    <property type="entry name" value="Clathrin_mu_CS"/>
</dbReference>
<dbReference type="InterPro" id="IPR011012">
    <property type="entry name" value="Longin-like_dom_sf"/>
</dbReference>
<dbReference type="InterPro" id="IPR028565">
    <property type="entry name" value="MHD"/>
</dbReference>
<dbReference type="PANTHER" id="PTHR10529">
    <property type="entry name" value="AP COMPLEX SUBUNIT MU"/>
    <property type="match status" value="1"/>
</dbReference>
<dbReference type="Pfam" id="PF00928">
    <property type="entry name" value="Adap_comp_sub"/>
    <property type="match status" value="1"/>
</dbReference>
<dbReference type="Pfam" id="PF01217">
    <property type="entry name" value="Clat_adaptor_s"/>
    <property type="match status" value="1"/>
</dbReference>
<dbReference type="PIRSF" id="PIRSF005992">
    <property type="entry name" value="Clathrin_mu"/>
    <property type="match status" value="1"/>
</dbReference>
<dbReference type="PRINTS" id="PR00314">
    <property type="entry name" value="CLATHRINADPT"/>
</dbReference>
<dbReference type="SUPFAM" id="SSF49447">
    <property type="entry name" value="Second domain of Mu2 adaptin subunit (ap50) of ap2 adaptor"/>
    <property type="match status" value="1"/>
</dbReference>
<dbReference type="SUPFAM" id="SSF64356">
    <property type="entry name" value="SNARE-like"/>
    <property type="match status" value="1"/>
</dbReference>
<dbReference type="PROSITE" id="PS00990">
    <property type="entry name" value="CLAT_ADAPTOR_M_1"/>
    <property type="match status" value="1"/>
</dbReference>
<dbReference type="PROSITE" id="PS00991">
    <property type="entry name" value="CLAT_ADAPTOR_M_2"/>
    <property type="match status" value="1"/>
</dbReference>
<dbReference type="PROSITE" id="PS51072">
    <property type="entry name" value="MHD"/>
    <property type="match status" value="1"/>
</dbReference>
<protein>
    <recommendedName>
        <fullName>AP-3 complex subunit mu-2</fullName>
    </recommendedName>
    <alternativeName>
        <fullName>Adaptor-related protein complex 3 subunit mu-2</fullName>
    </alternativeName>
    <alternativeName>
        <fullName>Clathrin assembly protein assembly protein complex 3 mu-2 medium chain</fullName>
    </alternativeName>
    <alternativeName>
        <fullName>Clathrin coat assembly protein AP47 homolog 2</fullName>
    </alternativeName>
    <alternativeName>
        <fullName>Clathrin coat-associated protein AP47 homolog 2</fullName>
    </alternativeName>
    <alternativeName>
        <fullName>Golgi adaptor AP-1 47 kDa protein homolog 2</fullName>
    </alternativeName>
    <alternativeName>
        <fullName>HA1 47 kDa subunit homolog 2</fullName>
    </alternativeName>
    <alternativeName>
        <fullName>Mu3B-adaptin</fullName>
    </alternativeName>
    <alternativeName>
        <fullName>P47B</fullName>
    </alternativeName>
</protein>
<organism>
    <name type="scientific">Homo sapiens</name>
    <name type="common">Human</name>
    <dbReference type="NCBI Taxonomy" id="9606"/>
    <lineage>
        <taxon>Eukaryota</taxon>
        <taxon>Metazoa</taxon>
        <taxon>Chordata</taxon>
        <taxon>Craniata</taxon>
        <taxon>Vertebrata</taxon>
        <taxon>Euteleostomi</taxon>
        <taxon>Mammalia</taxon>
        <taxon>Eutheria</taxon>
        <taxon>Euarchontoglires</taxon>
        <taxon>Primates</taxon>
        <taxon>Haplorrhini</taxon>
        <taxon>Catarrhini</taxon>
        <taxon>Hominidae</taxon>
        <taxon>Homo</taxon>
    </lineage>
</organism>
<keyword id="KW-0025">Alternative splicing</keyword>
<keyword id="KW-0968">Cytoplasmic vesicle</keyword>
<keyword id="KW-0333">Golgi apparatus</keyword>
<keyword id="KW-0472">Membrane</keyword>
<keyword id="KW-0653">Protein transport</keyword>
<keyword id="KW-1267">Proteomics identification</keyword>
<keyword id="KW-1185">Reference proteome</keyword>
<keyword id="KW-0813">Transport</keyword>
<feature type="chain" id="PRO_0000193784" description="AP-3 complex subunit mu-2">
    <location>
        <begin position="1"/>
        <end position="418"/>
    </location>
</feature>
<feature type="domain" description="MHD" evidence="2">
    <location>
        <begin position="176"/>
        <end position="417"/>
    </location>
</feature>
<feature type="splice variant" id="VSP_055790" description="In isoform 2." evidence="3">
    <original>NLVAIP</original>
    <variation>KCCLGM</variation>
    <location>
        <begin position="268"/>
        <end position="273"/>
    </location>
</feature>
<feature type="splice variant" id="VSP_055791" description="In isoform 2." evidence="3">
    <location>
        <begin position="274"/>
        <end position="418"/>
    </location>
</feature>
<reference key="1">
    <citation type="journal article" date="1995" name="Genomics">
        <title>Isolation of 115 human chromosome 8-specific expressed-sequence tags by exon amplification.</title>
        <authorList>
            <person name="Koyama K."/>
            <person name="Sudo K."/>
            <person name="Nakamura Y."/>
        </authorList>
    </citation>
    <scope>NUCLEOTIDE SEQUENCE [MRNA] (ISOFORM 1)</scope>
    <source>
        <tissue>Brain</tissue>
    </source>
</reference>
<reference key="2">
    <citation type="journal article" date="2004" name="Nat. Genet.">
        <title>Complete sequencing and characterization of 21,243 full-length human cDNAs.</title>
        <authorList>
            <person name="Ota T."/>
            <person name="Suzuki Y."/>
            <person name="Nishikawa T."/>
            <person name="Otsuki T."/>
            <person name="Sugiyama T."/>
            <person name="Irie R."/>
            <person name="Wakamatsu A."/>
            <person name="Hayashi K."/>
            <person name="Sato H."/>
            <person name="Nagai K."/>
            <person name="Kimura K."/>
            <person name="Makita H."/>
            <person name="Sekine M."/>
            <person name="Obayashi M."/>
            <person name="Nishi T."/>
            <person name="Shibahara T."/>
            <person name="Tanaka T."/>
            <person name="Ishii S."/>
            <person name="Yamamoto J."/>
            <person name="Saito K."/>
            <person name="Kawai Y."/>
            <person name="Isono Y."/>
            <person name="Nakamura Y."/>
            <person name="Nagahari K."/>
            <person name="Murakami K."/>
            <person name="Yasuda T."/>
            <person name="Iwayanagi T."/>
            <person name="Wagatsuma M."/>
            <person name="Shiratori A."/>
            <person name="Sudo H."/>
            <person name="Hosoiri T."/>
            <person name="Kaku Y."/>
            <person name="Kodaira H."/>
            <person name="Kondo H."/>
            <person name="Sugawara M."/>
            <person name="Takahashi M."/>
            <person name="Kanda K."/>
            <person name="Yokoi T."/>
            <person name="Furuya T."/>
            <person name="Kikkawa E."/>
            <person name="Omura Y."/>
            <person name="Abe K."/>
            <person name="Kamihara K."/>
            <person name="Katsuta N."/>
            <person name="Sato K."/>
            <person name="Tanikawa M."/>
            <person name="Yamazaki M."/>
            <person name="Ninomiya K."/>
            <person name="Ishibashi T."/>
            <person name="Yamashita H."/>
            <person name="Murakawa K."/>
            <person name="Fujimori K."/>
            <person name="Tanai H."/>
            <person name="Kimata M."/>
            <person name="Watanabe M."/>
            <person name="Hiraoka S."/>
            <person name="Chiba Y."/>
            <person name="Ishida S."/>
            <person name="Ono Y."/>
            <person name="Takiguchi S."/>
            <person name="Watanabe S."/>
            <person name="Yosida M."/>
            <person name="Hotuta T."/>
            <person name="Kusano J."/>
            <person name="Kanehori K."/>
            <person name="Takahashi-Fujii A."/>
            <person name="Hara H."/>
            <person name="Tanase T.-O."/>
            <person name="Nomura Y."/>
            <person name="Togiya S."/>
            <person name="Komai F."/>
            <person name="Hara R."/>
            <person name="Takeuchi K."/>
            <person name="Arita M."/>
            <person name="Imose N."/>
            <person name="Musashino K."/>
            <person name="Yuuki H."/>
            <person name="Oshima A."/>
            <person name="Sasaki N."/>
            <person name="Aotsuka S."/>
            <person name="Yoshikawa Y."/>
            <person name="Matsunawa H."/>
            <person name="Ichihara T."/>
            <person name="Shiohata N."/>
            <person name="Sano S."/>
            <person name="Moriya S."/>
            <person name="Momiyama H."/>
            <person name="Satoh N."/>
            <person name="Takami S."/>
            <person name="Terashima Y."/>
            <person name="Suzuki O."/>
            <person name="Nakagawa S."/>
            <person name="Senoh A."/>
            <person name="Mizoguchi H."/>
            <person name="Goto Y."/>
            <person name="Shimizu F."/>
            <person name="Wakebe H."/>
            <person name="Hishigaki H."/>
            <person name="Watanabe T."/>
            <person name="Sugiyama A."/>
            <person name="Takemoto M."/>
            <person name="Kawakami B."/>
            <person name="Yamazaki M."/>
            <person name="Watanabe K."/>
            <person name="Kumagai A."/>
            <person name="Itakura S."/>
            <person name="Fukuzumi Y."/>
            <person name="Fujimori Y."/>
            <person name="Komiyama M."/>
            <person name="Tashiro H."/>
            <person name="Tanigami A."/>
            <person name="Fujiwara T."/>
            <person name="Ono T."/>
            <person name="Yamada K."/>
            <person name="Fujii Y."/>
            <person name="Ozaki K."/>
            <person name="Hirao M."/>
            <person name="Ohmori Y."/>
            <person name="Kawabata A."/>
            <person name="Hikiji T."/>
            <person name="Kobatake N."/>
            <person name="Inagaki H."/>
            <person name="Ikema Y."/>
            <person name="Okamoto S."/>
            <person name="Okitani R."/>
            <person name="Kawakami T."/>
            <person name="Noguchi S."/>
            <person name="Itoh T."/>
            <person name="Shigeta K."/>
            <person name="Senba T."/>
            <person name="Matsumura K."/>
            <person name="Nakajima Y."/>
            <person name="Mizuno T."/>
            <person name="Morinaga M."/>
            <person name="Sasaki M."/>
            <person name="Togashi T."/>
            <person name="Oyama M."/>
            <person name="Hata H."/>
            <person name="Watanabe M."/>
            <person name="Komatsu T."/>
            <person name="Mizushima-Sugano J."/>
            <person name="Satoh T."/>
            <person name="Shirai Y."/>
            <person name="Takahashi Y."/>
            <person name="Nakagawa K."/>
            <person name="Okumura K."/>
            <person name="Nagase T."/>
            <person name="Nomura N."/>
            <person name="Kikuchi H."/>
            <person name="Masuho Y."/>
            <person name="Yamashita R."/>
            <person name="Nakai K."/>
            <person name="Yada T."/>
            <person name="Nakamura Y."/>
            <person name="Ohara O."/>
            <person name="Isogai T."/>
            <person name="Sugano S."/>
        </authorList>
    </citation>
    <scope>NUCLEOTIDE SEQUENCE [LARGE SCALE MRNA] (ISOFORM 1)</scope>
    <source>
        <tissue>Testis</tissue>
    </source>
</reference>
<reference key="3">
    <citation type="journal article" date="2006" name="Nature">
        <title>DNA sequence and analysis of human chromosome 8.</title>
        <authorList>
            <person name="Nusbaum C."/>
            <person name="Mikkelsen T.S."/>
            <person name="Zody M.C."/>
            <person name="Asakawa S."/>
            <person name="Taudien S."/>
            <person name="Garber M."/>
            <person name="Kodira C.D."/>
            <person name="Schueler M.G."/>
            <person name="Shimizu A."/>
            <person name="Whittaker C.A."/>
            <person name="Chang J.L."/>
            <person name="Cuomo C.A."/>
            <person name="Dewar K."/>
            <person name="FitzGerald M.G."/>
            <person name="Yang X."/>
            <person name="Allen N.R."/>
            <person name="Anderson S."/>
            <person name="Asakawa T."/>
            <person name="Blechschmidt K."/>
            <person name="Bloom T."/>
            <person name="Borowsky M.L."/>
            <person name="Butler J."/>
            <person name="Cook A."/>
            <person name="Corum B."/>
            <person name="DeArellano K."/>
            <person name="DeCaprio D."/>
            <person name="Dooley K.T."/>
            <person name="Dorris L. III"/>
            <person name="Engels R."/>
            <person name="Gloeckner G."/>
            <person name="Hafez N."/>
            <person name="Hagopian D.S."/>
            <person name="Hall J.L."/>
            <person name="Ishikawa S.K."/>
            <person name="Jaffe D.B."/>
            <person name="Kamat A."/>
            <person name="Kudoh J."/>
            <person name="Lehmann R."/>
            <person name="Lokitsang T."/>
            <person name="Macdonald P."/>
            <person name="Major J.E."/>
            <person name="Matthews C.D."/>
            <person name="Mauceli E."/>
            <person name="Menzel U."/>
            <person name="Mihalev A.H."/>
            <person name="Minoshima S."/>
            <person name="Murayama Y."/>
            <person name="Naylor J.W."/>
            <person name="Nicol R."/>
            <person name="Nguyen C."/>
            <person name="O'Leary S.B."/>
            <person name="O'Neill K."/>
            <person name="Parker S.C.J."/>
            <person name="Polley A."/>
            <person name="Raymond C.K."/>
            <person name="Reichwald K."/>
            <person name="Rodriguez J."/>
            <person name="Sasaki T."/>
            <person name="Schilhabel M."/>
            <person name="Siddiqui R."/>
            <person name="Smith C.L."/>
            <person name="Sneddon T.P."/>
            <person name="Talamas J.A."/>
            <person name="Tenzin P."/>
            <person name="Topham K."/>
            <person name="Venkataraman V."/>
            <person name="Wen G."/>
            <person name="Yamazaki S."/>
            <person name="Young S.K."/>
            <person name="Zeng Q."/>
            <person name="Zimmer A.R."/>
            <person name="Rosenthal A."/>
            <person name="Birren B.W."/>
            <person name="Platzer M."/>
            <person name="Shimizu N."/>
            <person name="Lander E.S."/>
        </authorList>
    </citation>
    <scope>NUCLEOTIDE SEQUENCE [LARGE SCALE GENOMIC DNA]</scope>
</reference>
<reference key="4">
    <citation type="submission" date="2005-09" db="EMBL/GenBank/DDBJ databases">
        <authorList>
            <person name="Mural R.J."/>
            <person name="Istrail S."/>
            <person name="Sutton G.G."/>
            <person name="Florea L."/>
            <person name="Halpern A.L."/>
            <person name="Mobarry C.M."/>
            <person name="Lippert R."/>
            <person name="Walenz B."/>
            <person name="Shatkay H."/>
            <person name="Dew I."/>
            <person name="Miller J.R."/>
            <person name="Flanigan M.J."/>
            <person name="Edwards N.J."/>
            <person name="Bolanos R."/>
            <person name="Fasulo D."/>
            <person name="Halldorsson B.V."/>
            <person name="Hannenhalli S."/>
            <person name="Turner R."/>
            <person name="Yooseph S."/>
            <person name="Lu F."/>
            <person name="Nusskern D.R."/>
            <person name="Shue B.C."/>
            <person name="Zheng X.H."/>
            <person name="Zhong F."/>
            <person name="Delcher A.L."/>
            <person name="Huson D.H."/>
            <person name="Kravitz S.A."/>
            <person name="Mouchard L."/>
            <person name="Reinert K."/>
            <person name="Remington K.A."/>
            <person name="Clark A.G."/>
            <person name="Waterman M.S."/>
            <person name="Eichler E.E."/>
            <person name="Adams M.D."/>
            <person name="Hunkapiller M.W."/>
            <person name="Myers E.W."/>
            <person name="Venter J.C."/>
        </authorList>
    </citation>
    <scope>NUCLEOTIDE SEQUENCE [LARGE SCALE GENOMIC DNA]</scope>
</reference>
<reference key="5">
    <citation type="journal article" date="2004" name="Genome Res.">
        <title>The status, quality, and expansion of the NIH full-length cDNA project: the Mammalian Gene Collection (MGC).</title>
        <authorList>
            <consortium name="The MGC Project Team"/>
        </authorList>
    </citation>
    <scope>NUCLEOTIDE SEQUENCE [LARGE SCALE MRNA] (ISOFORMS 1 AND 2)</scope>
    <source>
        <tissue>Brain</tissue>
        <tissue>Lung</tissue>
    </source>
</reference>
<comment type="function">
    <text>Part of the AP-3 complex, an adaptor-related complex which is not clathrin-associated. The complex is associated with the Golgi region as well as more peripheral structures. It facilitates the budding of vesicles from the Golgi membrane and may be directly involved in trafficking to lysosomes. In concert with the BLOC-1 complex, AP-3 is required to target cargos into vesicles assembled at cell bodies for delivery into neurites and nerve terminals.</text>
</comment>
<comment type="subunit">
    <text evidence="1">AP-3 associates with the BLOC-1 complex (By similarity). Adaptor protein complex 3 (AP-3) is a heterotetramer composed of two large adaptins (delta-type subunit AP3D1 and beta-type subunit AP3B1 or AP3B2), a medium adaptin (mu-type subunit AP3M1 or AP3M2) and a small adaptin (sigma-type subunit APS1 or AP3S2).</text>
</comment>
<comment type="interaction">
    <interactant intactId="EBI-12177015">
        <id>P53677-2</id>
    </interactant>
    <interactant intactId="EBI-348399">
        <id>P22607</id>
        <label>FGFR3</label>
    </interactant>
    <organismsDiffer>false</organismsDiffer>
    <experiments>3</experiments>
</comment>
<comment type="interaction">
    <interactant intactId="EBI-12177015">
        <id>P53677-2</id>
    </interactant>
    <interactant intactId="EBI-350145">
        <id>P01112</id>
        <label>HRAS</label>
    </interactant>
    <organismsDiffer>false</organismsDiffer>
    <experiments>3</experiments>
</comment>
<comment type="interaction">
    <interactant intactId="EBI-12177015">
        <id>P53677-2</id>
    </interactant>
    <interactant intactId="EBI-16439278">
        <id>Q6FHY5</id>
        <label>MEOX2</label>
    </interactant>
    <organismsDiffer>false</organismsDiffer>
    <experiments>3</experiments>
</comment>
<comment type="interaction">
    <interactant intactId="EBI-12177015">
        <id>P53677-2</id>
    </interactant>
    <interactant intactId="EBI-5235340">
        <id>Q7Z699</id>
        <label>SPRED1</label>
    </interactant>
    <organismsDiffer>false</organismsDiffer>
    <experiments>3</experiments>
</comment>
<comment type="subcellular location">
    <subcellularLocation>
        <location>Golgi apparatus</location>
    </subcellularLocation>
    <subcellularLocation>
        <location evidence="1">Cytoplasmic vesicle membrane</location>
        <topology evidence="1">Peripheral membrane protein</topology>
        <orientation evidence="1">Cytoplasmic side</orientation>
    </subcellularLocation>
    <text evidence="1">Component of the coat surrounding the cytoplasmic face of coated vesicles located at the Golgi complex.</text>
</comment>
<comment type="alternative products">
    <event type="alternative splicing"/>
    <isoform>
        <id>P53677-1</id>
        <name>1</name>
        <sequence type="displayed"/>
    </isoform>
    <isoform>
        <id>P53677-2</id>
        <name>2</name>
        <sequence type="described" ref="VSP_055790 VSP_055791"/>
    </isoform>
</comment>
<comment type="similarity">
    <text evidence="4">Belongs to the adaptor complexes medium subunit family.</text>
</comment>
<proteinExistence type="evidence at protein level"/>
<gene>
    <name type="primary">AP3M2</name>
</gene>
<name>AP3M2_HUMAN</name>